<sequence length="154" mass="17383">MATFSQKPAEVEKKWILIDAEGLVVGRLASIIAMRLRGKHKATFTPHVDDGDNVIVINADKIVLTGKKYEDKVYYWHTGYAGGIKERTARQIIEGRFPERVVEKAVERMVPRGPLGRRQMKNLRVYAGSNHPHEAQQPVVLDVAKLNKKNVRSA</sequence>
<gene>
    <name evidence="1" type="primary">rplM</name>
    <name type="ordered locus">Arad_1812</name>
</gene>
<feature type="chain" id="PRO_1000166843" description="Large ribosomal subunit protein uL13">
    <location>
        <begin position="1"/>
        <end position="154"/>
    </location>
</feature>
<accession>B9JD18</accession>
<name>RL13_RHIR8</name>
<organism>
    <name type="scientific">Rhizobium rhizogenes (strain K84 / ATCC BAA-868)</name>
    <name type="common">Agrobacterium radiobacter</name>
    <dbReference type="NCBI Taxonomy" id="311403"/>
    <lineage>
        <taxon>Bacteria</taxon>
        <taxon>Pseudomonadati</taxon>
        <taxon>Pseudomonadota</taxon>
        <taxon>Alphaproteobacteria</taxon>
        <taxon>Hyphomicrobiales</taxon>
        <taxon>Rhizobiaceae</taxon>
        <taxon>Rhizobium/Agrobacterium group</taxon>
        <taxon>Rhizobium</taxon>
    </lineage>
</organism>
<reference key="1">
    <citation type="journal article" date="2009" name="J. Bacteriol.">
        <title>Genome sequences of three Agrobacterium biovars help elucidate the evolution of multichromosome genomes in bacteria.</title>
        <authorList>
            <person name="Slater S.C."/>
            <person name="Goldman B.S."/>
            <person name="Goodner B."/>
            <person name="Setubal J.C."/>
            <person name="Farrand S.K."/>
            <person name="Nester E.W."/>
            <person name="Burr T.J."/>
            <person name="Banta L."/>
            <person name="Dickerman A.W."/>
            <person name="Paulsen I."/>
            <person name="Otten L."/>
            <person name="Suen G."/>
            <person name="Welch R."/>
            <person name="Almeida N.F."/>
            <person name="Arnold F."/>
            <person name="Burton O.T."/>
            <person name="Du Z."/>
            <person name="Ewing A."/>
            <person name="Godsy E."/>
            <person name="Heisel S."/>
            <person name="Houmiel K.L."/>
            <person name="Jhaveri J."/>
            <person name="Lu J."/>
            <person name="Miller N.M."/>
            <person name="Norton S."/>
            <person name="Chen Q."/>
            <person name="Phoolcharoen W."/>
            <person name="Ohlin V."/>
            <person name="Ondrusek D."/>
            <person name="Pride N."/>
            <person name="Stricklin S.L."/>
            <person name="Sun J."/>
            <person name="Wheeler C."/>
            <person name="Wilson L."/>
            <person name="Zhu H."/>
            <person name="Wood D.W."/>
        </authorList>
    </citation>
    <scope>NUCLEOTIDE SEQUENCE [LARGE SCALE GENOMIC DNA]</scope>
    <source>
        <strain>K84 / ATCC BAA-868</strain>
    </source>
</reference>
<protein>
    <recommendedName>
        <fullName evidence="1">Large ribosomal subunit protein uL13</fullName>
    </recommendedName>
    <alternativeName>
        <fullName evidence="2">50S ribosomal protein L13</fullName>
    </alternativeName>
</protein>
<keyword id="KW-0687">Ribonucleoprotein</keyword>
<keyword id="KW-0689">Ribosomal protein</keyword>
<comment type="function">
    <text evidence="1">This protein is one of the early assembly proteins of the 50S ribosomal subunit, although it is not seen to bind rRNA by itself. It is important during the early stages of 50S assembly.</text>
</comment>
<comment type="subunit">
    <text evidence="1">Part of the 50S ribosomal subunit.</text>
</comment>
<comment type="similarity">
    <text evidence="1">Belongs to the universal ribosomal protein uL13 family.</text>
</comment>
<proteinExistence type="inferred from homology"/>
<dbReference type="EMBL" id="CP000628">
    <property type="protein sequence ID" value="ACM26155.1"/>
    <property type="molecule type" value="Genomic_DNA"/>
</dbReference>
<dbReference type="RefSeq" id="WP_007692724.1">
    <property type="nucleotide sequence ID" value="NC_011985.1"/>
</dbReference>
<dbReference type="SMR" id="B9JD18"/>
<dbReference type="STRING" id="311403.Arad_1812"/>
<dbReference type="GeneID" id="86848034"/>
<dbReference type="KEGG" id="ara:Arad_1812"/>
<dbReference type="eggNOG" id="COG0102">
    <property type="taxonomic scope" value="Bacteria"/>
</dbReference>
<dbReference type="HOGENOM" id="CLU_082184_2_0_5"/>
<dbReference type="Proteomes" id="UP000001600">
    <property type="component" value="Chromosome 1"/>
</dbReference>
<dbReference type="GO" id="GO:0022625">
    <property type="term" value="C:cytosolic large ribosomal subunit"/>
    <property type="evidence" value="ECO:0007669"/>
    <property type="project" value="TreeGrafter"/>
</dbReference>
<dbReference type="GO" id="GO:0003729">
    <property type="term" value="F:mRNA binding"/>
    <property type="evidence" value="ECO:0007669"/>
    <property type="project" value="TreeGrafter"/>
</dbReference>
<dbReference type="GO" id="GO:0003735">
    <property type="term" value="F:structural constituent of ribosome"/>
    <property type="evidence" value="ECO:0007669"/>
    <property type="project" value="InterPro"/>
</dbReference>
<dbReference type="GO" id="GO:0017148">
    <property type="term" value="P:negative regulation of translation"/>
    <property type="evidence" value="ECO:0007669"/>
    <property type="project" value="TreeGrafter"/>
</dbReference>
<dbReference type="GO" id="GO:0006412">
    <property type="term" value="P:translation"/>
    <property type="evidence" value="ECO:0007669"/>
    <property type="project" value="UniProtKB-UniRule"/>
</dbReference>
<dbReference type="CDD" id="cd00392">
    <property type="entry name" value="Ribosomal_L13"/>
    <property type="match status" value="1"/>
</dbReference>
<dbReference type="FunFam" id="3.90.1180.10:FF:000001">
    <property type="entry name" value="50S ribosomal protein L13"/>
    <property type="match status" value="1"/>
</dbReference>
<dbReference type="Gene3D" id="3.90.1180.10">
    <property type="entry name" value="Ribosomal protein L13"/>
    <property type="match status" value="1"/>
</dbReference>
<dbReference type="HAMAP" id="MF_01366">
    <property type="entry name" value="Ribosomal_uL13"/>
    <property type="match status" value="1"/>
</dbReference>
<dbReference type="InterPro" id="IPR005822">
    <property type="entry name" value="Ribosomal_uL13"/>
</dbReference>
<dbReference type="InterPro" id="IPR005823">
    <property type="entry name" value="Ribosomal_uL13_bac-type"/>
</dbReference>
<dbReference type="InterPro" id="IPR036899">
    <property type="entry name" value="Ribosomal_uL13_sf"/>
</dbReference>
<dbReference type="NCBIfam" id="TIGR01066">
    <property type="entry name" value="rplM_bact"/>
    <property type="match status" value="1"/>
</dbReference>
<dbReference type="PANTHER" id="PTHR11545:SF2">
    <property type="entry name" value="LARGE RIBOSOMAL SUBUNIT PROTEIN UL13M"/>
    <property type="match status" value="1"/>
</dbReference>
<dbReference type="PANTHER" id="PTHR11545">
    <property type="entry name" value="RIBOSOMAL PROTEIN L13"/>
    <property type="match status" value="1"/>
</dbReference>
<dbReference type="Pfam" id="PF00572">
    <property type="entry name" value="Ribosomal_L13"/>
    <property type="match status" value="1"/>
</dbReference>
<dbReference type="PIRSF" id="PIRSF002181">
    <property type="entry name" value="Ribosomal_L13"/>
    <property type="match status" value="1"/>
</dbReference>
<dbReference type="SUPFAM" id="SSF52161">
    <property type="entry name" value="Ribosomal protein L13"/>
    <property type="match status" value="1"/>
</dbReference>
<evidence type="ECO:0000255" key="1">
    <source>
        <dbReference type="HAMAP-Rule" id="MF_01366"/>
    </source>
</evidence>
<evidence type="ECO:0000305" key="2"/>